<protein>
    <recommendedName>
        <fullName>Uncharacterized protein R213</fullName>
    </recommendedName>
</protein>
<organism>
    <name type="scientific">Acanthamoeba polyphaga mimivirus</name>
    <name type="common">APMV</name>
    <dbReference type="NCBI Taxonomy" id="212035"/>
    <lineage>
        <taxon>Viruses</taxon>
        <taxon>Varidnaviria</taxon>
        <taxon>Bamfordvirae</taxon>
        <taxon>Nucleocytoviricota</taxon>
        <taxon>Megaviricetes</taxon>
        <taxon>Imitervirales</taxon>
        <taxon>Mimiviridae</taxon>
        <taxon>Megamimivirinae</taxon>
        <taxon>Mimivirus</taxon>
        <taxon>Mimivirus bradfordmassiliense</taxon>
    </lineage>
</organism>
<keyword id="KW-0325">Glycoprotein</keyword>
<keyword id="KW-0472">Membrane</keyword>
<keyword id="KW-1185">Reference proteome</keyword>
<keyword id="KW-0812">Transmembrane</keyword>
<keyword id="KW-1133">Transmembrane helix</keyword>
<gene>
    <name type="ordered locus">MIMI_R213</name>
</gene>
<comment type="subcellular location">
    <subcellularLocation>
        <location evidence="2">Membrane</location>
        <topology evidence="2">Single-pass membrane protein</topology>
    </subcellularLocation>
</comment>
<evidence type="ECO:0000255" key="1"/>
<evidence type="ECO:0000305" key="2"/>
<organismHost>
    <name type="scientific">Acanthamoeba polyphaga</name>
    <name type="common">Amoeba</name>
    <dbReference type="NCBI Taxonomy" id="5757"/>
</organismHost>
<name>YR213_MIMIV</name>
<proteinExistence type="predicted"/>
<sequence length="142" mass="16643">MYSGRTSYDENTRQLYKLDDNGNFVFVENISLDNYFDLLIDIYRTNDPIDELDCCFKLHDMDTNTNNISDIIKASHSLPVNMGHIDPVFYLGYPVIFIIGVTYFSIIASRKINPSDRLLNEIKEYRLTCQNVYRKKFSINFV</sequence>
<accession>Q5UQ28</accession>
<dbReference type="EMBL" id="AY653733">
    <property type="protein sequence ID" value="AAV50486.1"/>
    <property type="molecule type" value="Genomic_DNA"/>
</dbReference>
<dbReference type="KEGG" id="vg:9924820"/>
<dbReference type="OrthoDB" id="23409at10239"/>
<dbReference type="Proteomes" id="UP000001134">
    <property type="component" value="Genome"/>
</dbReference>
<dbReference type="GO" id="GO:0016020">
    <property type="term" value="C:membrane"/>
    <property type="evidence" value="ECO:0007669"/>
    <property type="project" value="UniProtKB-SubCell"/>
</dbReference>
<reference key="1">
    <citation type="journal article" date="2004" name="Science">
        <title>The 1.2-megabase genome sequence of Mimivirus.</title>
        <authorList>
            <person name="Raoult D."/>
            <person name="Audic S."/>
            <person name="Robert C."/>
            <person name="Abergel C."/>
            <person name="Renesto P."/>
            <person name="Ogata H."/>
            <person name="La Scola B."/>
            <person name="Susan M."/>
            <person name="Claverie J.-M."/>
        </authorList>
    </citation>
    <scope>NUCLEOTIDE SEQUENCE [LARGE SCALE GENOMIC DNA]</scope>
    <source>
        <strain>Rowbotham-Bradford</strain>
    </source>
</reference>
<feature type="chain" id="PRO_0000247384" description="Uncharacterized protein R213">
    <location>
        <begin position="1"/>
        <end position="142"/>
    </location>
</feature>
<feature type="transmembrane region" description="Helical" evidence="1">
    <location>
        <begin position="88"/>
        <end position="108"/>
    </location>
</feature>
<feature type="glycosylation site" description="N-linked (GlcNAc...) asparagine; by host" evidence="1">
    <location>
        <position position="29"/>
    </location>
</feature>
<feature type="glycosylation site" description="N-linked (GlcNAc...) asparagine; by host" evidence="1">
    <location>
        <position position="67"/>
    </location>
</feature>